<comment type="function">
    <text evidence="1">Hydrolyzes acetyl esters in homogalacturonan regions of pectin. In type I primary cell wall, galacturonic acid residues of pectin can be acetylated at the O-2 and O-3 positions. Decreasing the degree of acetylation of pectin gels in vitro alters their physical properties.</text>
</comment>
<comment type="subcellular location">
    <subcellularLocation>
        <location evidence="6">Secreted</location>
        <location evidence="6">Cell wall</location>
    </subcellularLocation>
</comment>
<comment type="similarity">
    <text evidence="6">Belongs to the pectinacetylesterase family.</text>
</comment>
<comment type="sequence caution" evidence="6">
    <conflict type="erroneous initiation">
        <sequence resource="EMBL-CDS" id="AAC33215"/>
    </conflict>
    <text>Truncated N-terminus.</text>
</comment>
<organism>
    <name type="scientific">Arabidopsis thaliana</name>
    <name type="common">Mouse-ear cress</name>
    <dbReference type="NCBI Taxonomy" id="3702"/>
    <lineage>
        <taxon>Eukaryota</taxon>
        <taxon>Viridiplantae</taxon>
        <taxon>Streptophyta</taxon>
        <taxon>Embryophyta</taxon>
        <taxon>Tracheophyta</taxon>
        <taxon>Spermatophyta</taxon>
        <taxon>Magnoliopsida</taxon>
        <taxon>eudicotyledons</taxon>
        <taxon>Gunneridae</taxon>
        <taxon>Pentapetalae</taxon>
        <taxon>rosids</taxon>
        <taxon>malvids</taxon>
        <taxon>Brassicales</taxon>
        <taxon>Brassicaceae</taxon>
        <taxon>Camelineae</taxon>
        <taxon>Arabidopsis</taxon>
    </lineage>
</organism>
<accession>F4I107</accession>
<accession>O80537</accession>
<dbReference type="EC" id="3.1.1.-" evidence="6"/>
<dbReference type="EMBL" id="AC003970">
    <property type="protein sequence ID" value="AAC33215.1"/>
    <property type="status" value="ALT_INIT"/>
    <property type="molecule type" value="Genomic_DNA"/>
</dbReference>
<dbReference type="EMBL" id="CP002684">
    <property type="protein sequence ID" value="AEE28460.1"/>
    <property type="molecule type" value="Genomic_DNA"/>
</dbReference>
<dbReference type="PIR" id="B86229">
    <property type="entry name" value="B86229"/>
</dbReference>
<dbReference type="RefSeq" id="NP_172426.2">
    <property type="nucleotide sequence ID" value="NM_100826.3"/>
</dbReference>
<dbReference type="SMR" id="F4I107"/>
<dbReference type="FunCoup" id="F4I107">
    <property type="interactions" value="25"/>
</dbReference>
<dbReference type="STRING" id="3702.F4I107"/>
<dbReference type="ESTHER" id="arath-pae1">
    <property type="family name" value="Pectinacetylesterase-Notum"/>
</dbReference>
<dbReference type="GlyCosmos" id="F4I107">
    <property type="glycosylation" value="3 sites, No reported glycans"/>
</dbReference>
<dbReference type="GlyGen" id="F4I107">
    <property type="glycosylation" value="3 sites"/>
</dbReference>
<dbReference type="PaxDb" id="3702-AT1G09550.1"/>
<dbReference type="ProteomicsDB" id="236316"/>
<dbReference type="EnsemblPlants" id="AT1G09550.1">
    <property type="protein sequence ID" value="AT1G09550.1"/>
    <property type="gene ID" value="AT1G09550"/>
</dbReference>
<dbReference type="GeneID" id="837481"/>
<dbReference type="Gramene" id="AT1G09550.1">
    <property type="protein sequence ID" value="AT1G09550.1"/>
    <property type="gene ID" value="AT1G09550"/>
</dbReference>
<dbReference type="KEGG" id="ath:AT1G09550"/>
<dbReference type="Araport" id="AT1G09550"/>
<dbReference type="TAIR" id="AT1G09550">
    <property type="gene designation" value="ATPAE1"/>
</dbReference>
<dbReference type="eggNOG" id="KOG4287">
    <property type="taxonomic scope" value="Eukaryota"/>
</dbReference>
<dbReference type="HOGENOM" id="CLU_031008_0_0_1"/>
<dbReference type="InParanoid" id="F4I107"/>
<dbReference type="OMA" id="CTSHIKP"/>
<dbReference type="OrthoDB" id="1054003at2759"/>
<dbReference type="PRO" id="PR:F4I107"/>
<dbReference type="Proteomes" id="UP000006548">
    <property type="component" value="Chromosome 1"/>
</dbReference>
<dbReference type="ExpressionAtlas" id="F4I107">
    <property type="expression patterns" value="baseline and differential"/>
</dbReference>
<dbReference type="GO" id="GO:0005576">
    <property type="term" value="C:extracellular region"/>
    <property type="evidence" value="ECO:0007669"/>
    <property type="project" value="UniProtKB-KW"/>
</dbReference>
<dbReference type="GO" id="GO:0016787">
    <property type="term" value="F:hydrolase activity"/>
    <property type="evidence" value="ECO:0007669"/>
    <property type="project" value="UniProtKB-KW"/>
</dbReference>
<dbReference type="GO" id="GO:0071555">
    <property type="term" value="P:cell wall organization"/>
    <property type="evidence" value="ECO:0007669"/>
    <property type="project" value="UniProtKB-KW"/>
</dbReference>
<dbReference type="InterPro" id="IPR004963">
    <property type="entry name" value="PAE/NOTUM"/>
</dbReference>
<dbReference type="PANTHER" id="PTHR21562">
    <property type="entry name" value="NOTUM-RELATED"/>
    <property type="match status" value="1"/>
</dbReference>
<dbReference type="PANTHER" id="PTHR21562:SF54">
    <property type="entry name" value="PECTIN ACETYLESTERASE 1"/>
    <property type="match status" value="1"/>
</dbReference>
<dbReference type="Pfam" id="PF03283">
    <property type="entry name" value="PAE"/>
    <property type="match status" value="1"/>
</dbReference>
<gene>
    <name evidence="5" type="primary">PAE1</name>
    <name evidence="7" type="ordered locus">At1g09550</name>
    <name evidence="8" type="ORF">F14J9.21</name>
</gene>
<keyword id="KW-0134">Cell wall</keyword>
<keyword id="KW-0961">Cell wall biogenesis/degradation</keyword>
<keyword id="KW-0325">Glycoprotein</keyword>
<keyword id="KW-0378">Hydrolase</keyword>
<keyword id="KW-1185">Reference proteome</keyword>
<keyword id="KW-0964">Secreted</keyword>
<keyword id="KW-0732">Signal</keyword>
<name>PAE1_ARATH</name>
<protein>
    <recommendedName>
        <fullName evidence="5">Pectin acetylesterase 1</fullName>
        <ecNumber evidence="6">3.1.1.-</ecNumber>
    </recommendedName>
</protein>
<evidence type="ECO:0000250" key="1">
    <source>
        <dbReference type="UniProtKB" id="B9DFR3"/>
    </source>
</evidence>
<evidence type="ECO:0000250" key="2">
    <source>
        <dbReference type="UniProtKB" id="Q6P988"/>
    </source>
</evidence>
<evidence type="ECO:0000255" key="3"/>
<evidence type="ECO:0000255" key="4">
    <source>
        <dbReference type="PROSITE-ProRule" id="PRU00498"/>
    </source>
</evidence>
<evidence type="ECO:0000303" key="5">
    <source>
    </source>
</evidence>
<evidence type="ECO:0000305" key="6"/>
<evidence type="ECO:0000312" key="7">
    <source>
        <dbReference type="Araport" id="AT1G09550"/>
    </source>
</evidence>
<evidence type="ECO:0000312" key="8">
    <source>
        <dbReference type="EMBL" id="AAC33215.1"/>
    </source>
</evidence>
<reference key="1">
    <citation type="journal article" date="2000" name="Nature">
        <title>Sequence and analysis of chromosome 1 of the plant Arabidopsis thaliana.</title>
        <authorList>
            <person name="Theologis A."/>
            <person name="Ecker J.R."/>
            <person name="Palm C.J."/>
            <person name="Federspiel N.A."/>
            <person name="Kaul S."/>
            <person name="White O."/>
            <person name="Alonso J."/>
            <person name="Altafi H."/>
            <person name="Araujo R."/>
            <person name="Bowman C.L."/>
            <person name="Brooks S.Y."/>
            <person name="Buehler E."/>
            <person name="Chan A."/>
            <person name="Chao Q."/>
            <person name="Chen H."/>
            <person name="Cheuk R.F."/>
            <person name="Chin C.W."/>
            <person name="Chung M.K."/>
            <person name="Conn L."/>
            <person name="Conway A.B."/>
            <person name="Conway A.R."/>
            <person name="Creasy T.H."/>
            <person name="Dewar K."/>
            <person name="Dunn P."/>
            <person name="Etgu P."/>
            <person name="Feldblyum T.V."/>
            <person name="Feng J.-D."/>
            <person name="Fong B."/>
            <person name="Fujii C.Y."/>
            <person name="Gill J.E."/>
            <person name="Goldsmith A.D."/>
            <person name="Haas B."/>
            <person name="Hansen N.F."/>
            <person name="Hughes B."/>
            <person name="Huizar L."/>
            <person name="Hunter J.L."/>
            <person name="Jenkins J."/>
            <person name="Johnson-Hopson C."/>
            <person name="Khan S."/>
            <person name="Khaykin E."/>
            <person name="Kim C.J."/>
            <person name="Koo H.L."/>
            <person name="Kremenetskaia I."/>
            <person name="Kurtz D.B."/>
            <person name="Kwan A."/>
            <person name="Lam B."/>
            <person name="Langin-Hooper S."/>
            <person name="Lee A."/>
            <person name="Lee J.M."/>
            <person name="Lenz C.A."/>
            <person name="Li J.H."/>
            <person name="Li Y.-P."/>
            <person name="Lin X."/>
            <person name="Liu S.X."/>
            <person name="Liu Z.A."/>
            <person name="Luros J.S."/>
            <person name="Maiti R."/>
            <person name="Marziali A."/>
            <person name="Militscher J."/>
            <person name="Miranda M."/>
            <person name="Nguyen M."/>
            <person name="Nierman W.C."/>
            <person name="Osborne B.I."/>
            <person name="Pai G."/>
            <person name="Peterson J."/>
            <person name="Pham P.K."/>
            <person name="Rizzo M."/>
            <person name="Rooney T."/>
            <person name="Rowley D."/>
            <person name="Sakano H."/>
            <person name="Salzberg S.L."/>
            <person name="Schwartz J.R."/>
            <person name="Shinn P."/>
            <person name="Southwick A.M."/>
            <person name="Sun H."/>
            <person name="Tallon L.J."/>
            <person name="Tambunga G."/>
            <person name="Toriumi M.J."/>
            <person name="Town C.D."/>
            <person name="Utterback T."/>
            <person name="Van Aken S."/>
            <person name="Vaysberg M."/>
            <person name="Vysotskaia V.S."/>
            <person name="Walker M."/>
            <person name="Wu D."/>
            <person name="Yu G."/>
            <person name="Fraser C.M."/>
            <person name="Venter J.C."/>
            <person name="Davis R.W."/>
        </authorList>
    </citation>
    <scope>NUCLEOTIDE SEQUENCE [LARGE SCALE GENOMIC DNA]</scope>
    <source>
        <strain>cv. Columbia</strain>
    </source>
</reference>
<reference key="2">
    <citation type="journal article" date="2017" name="Plant J.">
        <title>Araport11: a complete reannotation of the Arabidopsis thaliana reference genome.</title>
        <authorList>
            <person name="Cheng C.Y."/>
            <person name="Krishnakumar V."/>
            <person name="Chan A.P."/>
            <person name="Thibaud-Nissen F."/>
            <person name="Schobel S."/>
            <person name="Town C.D."/>
        </authorList>
    </citation>
    <scope>GENOME REANNOTATION</scope>
    <source>
        <strain>cv. Columbia</strain>
    </source>
</reference>
<reference key="3">
    <citation type="journal article" date="2014" name="Planta">
        <title>Identification and functional characterization of the distinct plant pectin esterases PAE8 and PAE9 and their deletion mutants.</title>
        <authorList>
            <person name="de Souza A."/>
            <person name="Hull P.A."/>
            <person name="Gille S."/>
            <person name="Pauly M."/>
        </authorList>
    </citation>
    <scope>GENE FAMILY</scope>
</reference>
<proteinExistence type="inferred from homology"/>
<sequence>MKTLLYWGWSSLAGLILFSILAHGEMKTFNESNGTNANVLMVGLTLVQAAAAKGAVCLDGSVPGYHLCRGYGSGANNWIIQLQGGAWCDSIQNCQSRKGSGYGSSTLMEKELAFLGLLSNKAAENPDFYNWNKVKVRYCDGASFDGDSENKAAQLQYRGKRIFLAVMEDLMEKGMRQAKQALLSGCSSGGLSAILRCDDFNNLFPPTTTVKCMSDAGFFLDAVDVSGGHSLRRMYSGVVNTQGLQNTLPPTCTSHIKPFLCFFPQYIINQVKTPLFILNSGFDSWQIGNSLAPPSADKSGSWHNCSFSFRCTASQMHFLEGFKMSMLDALKTFSKFSKNGVLITSGWAHCQAERQDTWFPGYSGAGKAKGIAVAVGDWYFERTKQNSS</sequence>
<feature type="signal peptide" evidence="3">
    <location>
        <begin position="1"/>
        <end position="24"/>
    </location>
</feature>
<feature type="chain" id="PRO_0000431766" description="Pectin acetylesterase 1" evidence="3">
    <location>
        <begin position="25"/>
        <end position="388"/>
    </location>
</feature>
<feature type="active site" description="Charge relay system" evidence="2">
    <location>
        <position position="187"/>
    </location>
</feature>
<feature type="active site" description="Charge relay system" evidence="2">
    <location>
        <position position="283"/>
    </location>
</feature>
<feature type="active site" description="Charge relay system" evidence="2">
    <location>
        <position position="349"/>
    </location>
</feature>
<feature type="glycosylation site" description="N-linked (GlcNAc...) asparagine" evidence="4">
    <location>
        <position position="30"/>
    </location>
</feature>
<feature type="glycosylation site" description="N-linked (GlcNAc...) asparagine" evidence="4">
    <location>
        <position position="33"/>
    </location>
</feature>
<feature type="glycosylation site" description="N-linked (GlcNAc...) asparagine" evidence="4">
    <location>
        <position position="304"/>
    </location>
</feature>